<dbReference type="EMBL" id="BC126676">
    <property type="protein sequence ID" value="AAI26677.1"/>
    <property type="molecule type" value="mRNA"/>
</dbReference>
<dbReference type="RefSeq" id="NP_001071540.2">
    <property type="nucleotide sequence ID" value="NM_001078072.2"/>
</dbReference>
<dbReference type="STRING" id="9913.ENSBTAP00000012395"/>
<dbReference type="PaxDb" id="9913-ENSBTAP00000012395"/>
<dbReference type="GeneID" id="617268"/>
<dbReference type="KEGG" id="bta:617268"/>
<dbReference type="CTD" id="9715"/>
<dbReference type="eggNOG" id="ENOG502QXPE">
    <property type="taxonomic scope" value="Eukaryota"/>
</dbReference>
<dbReference type="HOGENOM" id="CLU_047357_1_0_1"/>
<dbReference type="InParanoid" id="A0JNG6"/>
<dbReference type="OrthoDB" id="8899318at2759"/>
<dbReference type="TreeFam" id="TF331537"/>
<dbReference type="Proteomes" id="UP000009136">
    <property type="component" value="Unplaced"/>
</dbReference>
<dbReference type="InterPro" id="IPR026782">
    <property type="entry name" value="FAM131"/>
</dbReference>
<dbReference type="PANTHER" id="PTHR15736:SF9">
    <property type="entry name" value="PROTEIN FAM131B"/>
    <property type="match status" value="1"/>
</dbReference>
<dbReference type="PANTHER" id="PTHR15736">
    <property type="entry name" value="PROTEIN FAM131B-RELATED"/>
    <property type="match status" value="1"/>
</dbReference>
<dbReference type="Pfam" id="PF15010">
    <property type="entry name" value="FAM131"/>
    <property type="match status" value="1"/>
</dbReference>
<evidence type="ECO:0000250" key="1">
    <source>
        <dbReference type="UniProtKB" id="Q3TY60"/>
    </source>
</evidence>
<evidence type="ECO:0000250" key="2">
    <source>
        <dbReference type="UniProtKB" id="Q86XD5"/>
    </source>
</evidence>
<evidence type="ECO:0000256" key="3">
    <source>
        <dbReference type="SAM" id="MobiDB-lite"/>
    </source>
</evidence>
<evidence type="ECO:0000305" key="4"/>
<proteinExistence type="evidence at transcript level"/>
<comment type="similarity">
    <text evidence="4">Belongs to the FAM131 family.</text>
</comment>
<feature type="chain" id="PRO_0000290120" description="Protein FAM131B">
    <location>
        <begin position="1"/>
        <end position="339"/>
    </location>
</feature>
<feature type="region of interest" description="Disordered" evidence="3">
    <location>
        <begin position="1"/>
        <end position="22"/>
    </location>
</feature>
<feature type="region of interest" description="Disordered" evidence="3">
    <location>
        <begin position="222"/>
        <end position="339"/>
    </location>
</feature>
<feature type="compositionally biased region" description="Polar residues" evidence="3">
    <location>
        <begin position="239"/>
        <end position="250"/>
    </location>
</feature>
<feature type="compositionally biased region" description="Polar residues" evidence="3">
    <location>
        <begin position="324"/>
        <end position="339"/>
    </location>
</feature>
<feature type="modified residue" description="Phosphoserine" evidence="1">
    <location>
        <position position="47"/>
    </location>
</feature>
<feature type="modified residue" description="Phosphoserine" evidence="1">
    <location>
        <position position="114"/>
    </location>
</feature>
<feature type="modified residue" description="Phosphoserine" evidence="2">
    <location>
        <position position="117"/>
    </location>
</feature>
<feature type="modified residue" description="Phosphothreonine" evidence="1">
    <location>
        <position position="325"/>
    </location>
</feature>
<feature type="modified residue" description="Phosphoserine" evidence="1">
    <location>
        <position position="327"/>
    </location>
</feature>
<sequence length="339" mass="36361">MDSTSSLHGSSLHRPSTEQTRTDFSWDGINLSMEDTTSILPKLKRNSNAYGIGALAKSSFSGISRSMKDHVTKPTAMGQGRVAHMIEWQGWGKTPAIQPQHSHEAVRRDTDAYSDLSDGEKEARFLAGVMEQFAISEATLMAWSSMDGEDMSVNSTQETLGCNYSDNYQELMESQDALAQAPMDGWPHSYVSQGMYCLGSSDAWEASDQSLIASPATGSYLGPAFGDSQPSLHEMGPSQPASGYSAQEPSSLLGGDTDWAPGVGGVDLAGGPAEEEKRKKMRGAGTWSPSPHARTPRCPPLSAGRCLTSHPQACSPLMRRKARPTTSFLPLLTQPSTPA</sequence>
<keyword id="KW-0597">Phosphoprotein</keyword>
<keyword id="KW-1185">Reference proteome</keyword>
<accession>A0JNG6</accession>
<name>F131B_BOVIN</name>
<reference key="1">
    <citation type="submission" date="2006-10" db="EMBL/GenBank/DDBJ databases">
        <authorList>
            <consortium name="NIH - Mammalian Gene Collection (MGC) project"/>
        </authorList>
    </citation>
    <scope>NUCLEOTIDE SEQUENCE [LARGE SCALE MRNA]</scope>
    <source>
        <strain>Hereford</strain>
        <tissue>Hypothalamus</tissue>
    </source>
</reference>
<protein>
    <recommendedName>
        <fullName>Protein FAM131B</fullName>
    </recommendedName>
</protein>
<organism>
    <name type="scientific">Bos taurus</name>
    <name type="common">Bovine</name>
    <dbReference type="NCBI Taxonomy" id="9913"/>
    <lineage>
        <taxon>Eukaryota</taxon>
        <taxon>Metazoa</taxon>
        <taxon>Chordata</taxon>
        <taxon>Craniata</taxon>
        <taxon>Vertebrata</taxon>
        <taxon>Euteleostomi</taxon>
        <taxon>Mammalia</taxon>
        <taxon>Eutheria</taxon>
        <taxon>Laurasiatheria</taxon>
        <taxon>Artiodactyla</taxon>
        <taxon>Ruminantia</taxon>
        <taxon>Pecora</taxon>
        <taxon>Bovidae</taxon>
        <taxon>Bovinae</taxon>
        <taxon>Bos</taxon>
    </lineage>
</organism>
<gene>
    <name type="primary">FAM131B</name>
</gene>